<dbReference type="EMBL" id="FO080899">
    <property type="protein sequence ID" value="CCD67613.1"/>
    <property type="molecule type" value="Genomic_DNA"/>
</dbReference>
<dbReference type="PIR" id="T28751">
    <property type="entry name" value="T28751"/>
</dbReference>
<dbReference type="RefSeq" id="NP_001379816.1">
    <property type="nucleotide sequence ID" value="NM_001392409.1"/>
</dbReference>
<dbReference type="RefSeq" id="NP_491791.1">
    <property type="nucleotide sequence ID" value="NM_059390.5"/>
</dbReference>
<dbReference type="SMR" id="Q9GYS9"/>
<dbReference type="BioGRID" id="52943">
    <property type="interactions" value="4"/>
</dbReference>
<dbReference type="FunCoup" id="Q9GYS9">
    <property type="interactions" value="229"/>
</dbReference>
<dbReference type="STRING" id="6239.T08B2.8.1"/>
<dbReference type="PaxDb" id="6239-T08B2.8"/>
<dbReference type="PeptideAtlas" id="Q9GYS9"/>
<dbReference type="EnsemblMetazoa" id="T08B2.8.1">
    <property type="protein sequence ID" value="T08B2.8.1"/>
    <property type="gene ID" value="WBGene00020348"/>
</dbReference>
<dbReference type="GeneID" id="188274"/>
<dbReference type="UCSC" id="T08B2.8">
    <property type="organism name" value="c. elegans"/>
</dbReference>
<dbReference type="AGR" id="WB:WBGene00020348"/>
<dbReference type="WormBase" id="T08B2.8">
    <property type="protein sequence ID" value="CE13433"/>
    <property type="gene ID" value="WBGene00020348"/>
    <property type="gene designation" value="mrpl-23"/>
</dbReference>
<dbReference type="eggNOG" id="KOG4089">
    <property type="taxonomic scope" value="Eukaryota"/>
</dbReference>
<dbReference type="GeneTree" id="ENSGT00390000007739"/>
<dbReference type="HOGENOM" id="CLU_103097_1_1_1"/>
<dbReference type="InParanoid" id="Q9GYS9"/>
<dbReference type="OMA" id="QMGDITW"/>
<dbReference type="OrthoDB" id="275582at2759"/>
<dbReference type="PhylomeDB" id="Q9GYS9"/>
<dbReference type="Reactome" id="R-CEL-5389840">
    <property type="pathway name" value="Mitochondrial translation elongation"/>
</dbReference>
<dbReference type="Reactome" id="R-CEL-5419276">
    <property type="pathway name" value="Mitochondrial translation termination"/>
</dbReference>
<dbReference type="PRO" id="PR:Q9GYS9"/>
<dbReference type="Proteomes" id="UP000001940">
    <property type="component" value="Chromosome I"/>
</dbReference>
<dbReference type="Bgee" id="WBGene00020348">
    <property type="expression patterns" value="Expressed in germ line (C elegans) and 4 other cell types or tissues"/>
</dbReference>
<dbReference type="GO" id="GO:0005762">
    <property type="term" value="C:mitochondrial large ribosomal subunit"/>
    <property type="evidence" value="ECO:0000250"/>
    <property type="project" value="UniProtKB"/>
</dbReference>
<dbReference type="GO" id="GO:0003735">
    <property type="term" value="F:structural constituent of ribosome"/>
    <property type="evidence" value="ECO:0000318"/>
    <property type="project" value="GO_Central"/>
</dbReference>
<dbReference type="GO" id="GO:0032543">
    <property type="term" value="P:mitochondrial translation"/>
    <property type="evidence" value="ECO:0000318"/>
    <property type="project" value="GO_Central"/>
</dbReference>
<dbReference type="FunFam" id="3.30.70.330:FF:000284">
    <property type="entry name" value="39S ribosomal protein L23, mitochondrial"/>
    <property type="match status" value="1"/>
</dbReference>
<dbReference type="Gene3D" id="3.30.70.330">
    <property type="match status" value="1"/>
</dbReference>
<dbReference type="InterPro" id="IPR012677">
    <property type="entry name" value="Nucleotide-bd_a/b_plait_sf"/>
</dbReference>
<dbReference type="InterPro" id="IPR013025">
    <property type="entry name" value="Ribosomal_uL23-like"/>
</dbReference>
<dbReference type="InterPro" id="IPR012678">
    <property type="entry name" value="Ribosomal_uL23/eL15/eS24_sf"/>
</dbReference>
<dbReference type="PANTHER" id="PTHR12059:SF5">
    <property type="entry name" value="LARGE RIBOSOMAL SUBUNIT PROTEIN UL23M"/>
    <property type="match status" value="1"/>
</dbReference>
<dbReference type="PANTHER" id="PTHR12059">
    <property type="entry name" value="RIBOSOMAL PROTEIN L23-RELATED"/>
    <property type="match status" value="1"/>
</dbReference>
<dbReference type="Pfam" id="PF00276">
    <property type="entry name" value="Ribosomal_L23"/>
    <property type="match status" value="1"/>
</dbReference>
<dbReference type="SUPFAM" id="SSF54189">
    <property type="entry name" value="Ribosomal proteins S24e, L23 and L15e"/>
    <property type="match status" value="1"/>
</dbReference>
<reference key="1">
    <citation type="journal article" date="1998" name="Science">
        <title>Genome sequence of the nematode C. elegans: a platform for investigating biology.</title>
        <authorList>
            <consortium name="The C. elegans sequencing consortium"/>
        </authorList>
    </citation>
    <scope>NUCLEOTIDE SEQUENCE [LARGE SCALE GENOMIC DNA]</scope>
    <source>
        <strain>Bristol N2</strain>
    </source>
</reference>
<protein>
    <recommendedName>
        <fullName evidence="2">Large ribosomal subunit protein uL23m</fullName>
    </recommendedName>
    <alternativeName>
        <fullName evidence="2">39S ribosomal protein L23, mitochondrial</fullName>
        <shortName>L23mt</shortName>
        <shortName>MRP-L23</shortName>
    </alternativeName>
</protein>
<evidence type="ECO:0000250" key="1">
    <source>
        <dbReference type="UniProtKB" id="Q16540"/>
    </source>
</evidence>
<evidence type="ECO:0000305" key="2"/>
<organism>
    <name type="scientific">Caenorhabditis elegans</name>
    <dbReference type="NCBI Taxonomy" id="6239"/>
    <lineage>
        <taxon>Eukaryota</taxon>
        <taxon>Metazoa</taxon>
        <taxon>Ecdysozoa</taxon>
        <taxon>Nematoda</taxon>
        <taxon>Chromadorea</taxon>
        <taxon>Rhabditida</taxon>
        <taxon>Rhabditina</taxon>
        <taxon>Rhabditomorpha</taxon>
        <taxon>Rhabditoidea</taxon>
        <taxon>Rhabditidae</taxon>
        <taxon>Peloderinae</taxon>
        <taxon>Caenorhabditis</taxon>
    </lineage>
</organism>
<name>RM23_CAEEL</name>
<feature type="chain" id="PRO_0000129489" description="Large ribosomal subunit protein uL23m">
    <location>
        <begin position="1"/>
        <end position="159"/>
    </location>
</feature>
<gene>
    <name type="primary">mrpl-23</name>
    <name type="ORF">T08B2.8</name>
</gene>
<sequence length="159" mass="19095">MTSRLARLWQPGNPQRRVFLPDFWMAVVESPSVGRNRLPRNCVKFEVDPRMSRHDIREYLTKIYDLPVRDVRTEVQMGDITWNSKLDHQYKKAMWKDEDKKIAYVFMSKGFEFSYPQMFEALEEDLELVKAMKQQEELKDKLNERYANRNRRVGQFLGA</sequence>
<comment type="subunit">
    <text evidence="1">Component of the mitochondrial ribosome large subunit (39S) which comprises a 16S rRNA and about 50 distinct proteins.</text>
</comment>
<comment type="subcellular location">
    <subcellularLocation>
        <location evidence="1">Mitochondrion</location>
    </subcellularLocation>
</comment>
<comment type="similarity">
    <text evidence="2">Belongs to the universal ribosomal protein uL23 family.</text>
</comment>
<keyword id="KW-0496">Mitochondrion</keyword>
<keyword id="KW-1185">Reference proteome</keyword>
<keyword id="KW-0687">Ribonucleoprotein</keyword>
<keyword id="KW-0689">Ribosomal protein</keyword>
<proteinExistence type="inferred from homology"/>
<accession>Q9GYS9</accession>